<feature type="signal peptide" evidence="3">
    <location>
        <begin position="1"/>
        <end position="26"/>
    </location>
</feature>
<feature type="chain" id="PRO_0000011920" description="Chitinase 1">
    <location>
        <begin position="27"/>
        <end position="314"/>
    </location>
</feature>
<feature type="domain" description="GH18" evidence="1">
    <location>
        <begin position="27"/>
        <end position="296"/>
    </location>
</feature>
<feature type="active site" description="Proton donor" evidence="1">
    <location>
        <position position="151"/>
    </location>
</feature>
<comment type="function">
    <text evidence="2 3">Able to cleave glycolchitin.</text>
</comment>
<comment type="catalytic activity">
    <reaction evidence="2">
        <text>Random endo-hydrolysis of N-acetyl-beta-D-glucosaminide (1-&gt;4)-beta-linkages in chitin and chitodextrins.</text>
        <dbReference type="EC" id="3.2.1.14"/>
    </reaction>
</comment>
<comment type="similarity">
    <text evidence="4">Belongs to the glycosyl hydrolase 18 family. Chitinase class II subfamily.</text>
</comment>
<protein>
    <recommendedName>
        <fullName>Chitinase 1</fullName>
        <ecNumber>3.2.1.14</ecNumber>
    </recommendedName>
    <alternativeName>
        <fullName>Tulip bulb chitinase-1</fullName>
        <shortName>TBC-1</shortName>
    </alternativeName>
</protein>
<sequence length="314" mass="35091">MASVSPSSLLLLFFALLSPLLPLTSALVFREYIGSQFNDVKFSDVPINPDVDFHFILAFAIDYTSGSSPTPTNGNFKPFWDTNNLSPSQVAAVKRTHSNVKVSLSLGGDSVGGKNVFFSPSSVSSWVENAVSSLTRIIKQYHLDGIDIDYEHFKGDPNTFAECIGQLVTRLKKNEVVSFVSIAPFDDAQVQSHYQALWEKYGHQIDYVNFQFYAYSARTSVEQFLKYFEEQSSNYHGGKVLVSFSTDSSGGLKPDNGFFRACSILKKQGKLHGIFVWSADDSLMSNNVFRYEMQAQSMLASVNSRDRAMYWSLL</sequence>
<reference key="1">
    <citation type="journal article" date="2000" name="Biosci. Biotechnol. Biochem.">
        <title>Cloning, sequencing, and expression of the tulip bulb chitinase-1 cDNA.</title>
        <authorList>
            <person name="Yamagami T."/>
            <person name="Tsutsumi K."/>
            <person name="Ishiguro M."/>
        </authorList>
    </citation>
    <scope>NUCLEOTIDE SEQUENCE [MRNA]</scope>
    <scope>FUNCTION</scope>
    <scope>ENZYME ACTIVITY</scope>
</reference>
<reference key="2">
    <citation type="journal article" date="1998" name="Biosci. Biotechnol. Biochem.">
        <title>Complete amino acid sequences of chitinase-1 and -2 from bulbs of genus Tulipa.</title>
        <authorList>
            <person name="Yamagami T."/>
            <person name="Ishiguro M."/>
        </authorList>
    </citation>
    <scope>PROTEIN SEQUENCE OF 27-301</scope>
    <scope>FUNCTION</scope>
    <source>
        <tissue>Bulb</tissue>
    </source>
</reference>
<dbReference type="EC" id="3.2.1.14"/>
<dbReference type="EMBL" id="AB035668">
    <property type="protein sequence ID" value="BAA88408.1"/>
    <property type="molecule type" value="mRNA"/>
</dbReference>
<dbReference type="PIR" id="JC7335">
    <property type="entry name" value="JC7335"/>
</dbReference>
<dbReference type="PIR" id="JE0183">
    <property type="entry name" value="JE0183"/>
</dbReference>
<dbReference type="SMR" id="Q9SLP4"/>
<dbReference type="CAZy" id="GH18">
    <property type="family name" value="Glycoside Hydrolase Family 18"/>
</dbReference>
<dbReference type="GO" id="GO:0008061">
    <property type="term" value="F:chitin binding"/>
    <property type="evidence" value="ECO:0007669"/>
    <property type="project" value="UniProtKB-KW"/>
</dbReference>
<dbReference type="GO" id="GO:0008843">
    <property type="term" value="F:endochitinase activity"/>
    <property type="evidence" value="ECO:0007669"/>
    <property type="project" value="UniProtKB-EC"/>
</dbReference>
<dbReference type="GO" id="GO:0006032">
    <property type="term" value="P:chitin catabolic process"/>
    <property type="evidence" value="ECO:0007669"/>
    <property type="project" value="UniProtKB-KW"/>
</dbReference>
<dbReference type="GO" id="GO:0000272">
    <property type="term" value="P:polysaccharide catabolic process"/>
    <property type="evidence" value="ECO:0007669"/>
    <property type="project" value="UniProtKB-KW"/>
</dbReference>
<dbReference type="CDD" id="cd06544">
    <property type="entry name" value="GH18_narbonin"/>
    <property type="match status" value="1"/>
</dbReference>
<dbReference type="Gene3D" id="3.20.20.80">
    <property type="entry name" value="Glycosidases"/>
    <property type="match status" value="1"/>
</dbReference>
<dbReference type="InterPro" id="IPR000677">
    <property type="entry name" value="Chitinase-like"/>
</dbReference>
<dbReference type="InterPro" id="IPR001223">
    <property type="entry name" value="Glyco_hydro18_cat"/>
</dbReference>
<dbReference type="InterPro" id="IPR001579">
    <property type="entry name" value="Glyco_hydro_18_chit_AS"/>
</dbReference>
<dbReference type="InterPro" id="IPR017853">
    <property type="entry name" value="Glycoside_hydrolase_SF"/>
</dbReference>
<dbReference type="PANTHER" id="PTHR46476:SF13">
    <property type="entry name" value="2, PUTATIVE, EXPRESSED-RELATED"/>
    <property type="match status" value="1"/>
</dbReference>
<dbReference type="PANTHER" id="PTHR46476">
    <property type="entry name" value="CHITINASE 2-LIKE"/>
    <property type="match status" value="1"/>
</dbReference>
<dbReference type="Pfam" id="PF00704">
    <property type="entry name" value="Glyco_hydro_18"/>
    <property type="match status" value="1"/>
</dbReference>
<dbReference type="PRINTS" id="PR00551">
    <property type="entry name" value="2SGLOBULIN"/>
</dbReference>
<dbReference type="SUPFAM" id="SSF51445">
    <property type="entry name" value="(Trans)glycosidases"/>
    <property type="match status" value="1"/>
</dbReference>
<dbReference type="PROSITE" id="PS01095">
    <property type="entry name" value="GH18_1"/>
    <property type="match status" value="1"/>
</dbReference>
<dbReference type="PROSITE" id="PS51910">
    <property type="entry name" value="GH18_2"/>
    <property type="match status" value="1"/>
</dbReference>
<organism>
    <name type="scientific">Tulipa saxatilis subsp. bakeri</name>
    <name type="common">Tulip</name>
    <name type="synonym">Tulipa bakeri</name>
    <dbReference type="NCBI Taxonomy" id="110455"/>
    <lineage>
        <taxon>Eukaryota</taxon>
        <taxon>Viridiplantae</taxon>
        <taxon>Streptophyta</taxon>
        <taxon>Embryophyta</taxon>
        <taxon>Tracheophyta</taxon>
        <taxon>Spermatophyta</taxon>
        <taxon>Magnoliopsida</taxon>
        <taxon>Liliopsida</taxon>
        <taxon>Liliales</taxon>
        <taxon>Liliaceae</taxon>
        <taxon>Tulipa</taxon>
    </lineage>
</organism>
<name>CHIT1_TULSB</name>
<accession>Q9SLP4</accession>
<accession>Q7M444</accession>
<keyword id="KW-0119">Carbohydrate metabolism</keyword>
<keyword id="KW-0146">Chitin degradation</keyword>
<keyword id="KW-0147">Chitin-binding</keyword>
<keyword id="KW-0903">Direct protein sequencing</keyword>
<keyword id="KW-0326">Glycosidase</keyword>
<keyword id="KW-0378">Hydrolase</keyword>
<keyword id="KW-0624">Polysaccharide degradation</keyword>
<keyword id="KW-0732">Signal</keyword>
<evidence type="ECO:0000255" key="1">
    <source>
        <dbReference type="PROSITE-ProRule" id="PRU01258"/>
    </source>
</evidence>
<evidence type="ECO:0000269" key="2">
    <source>
    </source>
</evidence>
<evidence type="ECO:0000269" key="3">
    <source>
    </source>
</evidence>
<evidence type="ECO:0000305" key="4"/>
<proteinExistence type="evidence at protein level"/>